<sequence>MQKIVSFLKKKKEPNSWSNFDRSDDKSKSLSKKGSLYANGNYDGGGSGSGSGGSSSNSSGSSRKINTGGNNRNGGGMVHSPSNSSISSTSSNNSNSTTASSSSKLKGNKNRNSSGKQKNSSSQHQQYGNTYYLDDECDSDDFIPGEVRSISKTIDFSKSERKWLTSLNIPQELLDGNINVLLNVLNFLSKKEGILYIQTPTNIINNTGKKNFQQQQLQQLQQQQQQQQLQQQQHQQHNHQIYGNGNNNNLNVNVNVNGNNNNSNNNNGNYTSYVNSRSNSIASNNSSITPSTSCSNLNNDNNNNNNNNCTDNNSNNNNNNNNNNSTTTTTTITNTNVNMIGASNINSSKSNLNSLLLSGGSNGNGGVDNLSSTTTSLSQNPPIQPMRRSDYNRIFIEPGKFYIFPESESFALARLVVEEEDPSKLFRIGENAEVKGAFGTVYQVFYVNGQYNNVDVALKKMDHKSEKKRRNNLNEISILRYLKHPNIVTYINSYEKNDEEIWMVMEYMDGGTIRDAISNFTFTEKYVAYITKEILHSLEYLASLNIAHRDLKSSNIMINSKAEVKLIDFGFSIDLTHLKQDINMCGSPFYMSPEQIQDKAHGLAVDIWSLGIVVAEMVRGRVPHHKSKIKAMFLAGTVGVKFSKEKKYSCHWSPELFDFLNVCLQMDPTKRPTPTQLLQHPFIATAATKAETLDLLPLLFMSKTLSKLSRGRDNQ</sequence>
<name>MKCE_DICDI</name>
<reference evidence="8" key="1">
    <citation type="journal article" date="2005" name="Nature">
        <title>The genome of the social amoeba Dictyostelium discoideum.</title>
        <authorList>
            <person name="Eichinger L."/>
            <person name="Pachebat J.A."/>
            <person name="Gloeckner G."/>
            <person name="Rajandream M.A."/>
            <person name="Sucgang R."/>
            <person name="Berriman M."/>
            <person name="Song J."/>
            <person name="Olsen R."/>
            <person name="Szafranski K."/>
            <person name="Xu Q."/>
            <person name="Tunggal B."/>
            <person name="Kummerfeld S."/>
            <person name="Madera M."/>
            <person name="Konfortov B.A."/>
            <person name="Rivero F."/>
            <person name="Bankier A.T."/>
            <person name="Lehmann R."/>
            <person name="Hamlin N."/>
            <person name="Davies R."/>
            <person name="Gaudet P."/>
            <person name="Fey P."/>
            <person name="Pilcher K."/>
            <person name="Chen G."/>
            <person name="Saunders D."/>
            <person name="Sodergren E.J."/>
            <person name="Davis P."/>
            <person name="Kerhornou A."/>
            <person name="Nie X."/>
            <person name="Hall N."/>
            <person name="Anjard C."/>
            <person name="Hemphill L."/>
            <person name="Bason N."/>
            <person name="Farbrother P."/>
            <person name="Desany B."/>
            <person name="Just E."/>
            <person name="Morio T."/>
            <person name="Rost R."/>
            <person name="Churcher C.M."/>
            <person name="Cooper J."/>
            <person name="Haydock S."/>
            <person name="van Driessche N."/>
            <person name="Cronin A."/>
            <person name="Goodhead I."/>
            <person name="Muzny D.M."/>
            <person name="Mourier T."/>
            <person name="Pain A."/>
            <person name="Lu M."/>
            <person name="Harper D."/>
            <person name="Lindsay R."/>
            <person name="Hauser H."/>
            <person name="James K.D."/>
            <person name="Quiles M."/>
            <person name="Madan Babu M."/>
            <person name="Saito T."/>
            <person name="Buchrieser C."/>
            <person name="Wardroper A."/>
            <person name="Felder M."/>
            <person name="Thangavelu M."/>
            <person name="Johnson D."/>
            <person name="Knights A."/>
            <person name="Loulseged H."/>
            <person name="Mungall K.L."/>
            <person name="Oliver K."/>
            <person name="Price C."/>
            <person name="Quail M.A."/>
            <person name="Urushihara H."/>
            <person name="Hernandez J."/>
            <person name="Rabbinowitsch E."/>
            <person name="Steffen D."/>
            <person name="Sanders M."/>
            <person name="Ma J."/>
            <person name="Kohara Y."/>
            <person name="Sharp S."/>
            <person name="Simmonds M.N."/>
            <person name="Spiegler S."/>
            <person name="Tivey A."/>
            <person name="Sugano S."/>
            <person name="White B."/>
            <person name="Walker D."/>
            <person name="Woodward J.R."/>
            <person name="Winckler T."/>
            <person name="Tanaka Y."/>
            <person name="Shaulsky G."/>
            <person name="Schleicher M."/>
            <person name="Weinstock G.M."/>
            <person name="Rosenthal A."/>
            <person name="Cox E.C."/>
            <person name="Chisholm R.L."/>
            <person name="Gibbs R.A."/>
            <person name="Loomis W.F."/>
            <person name="Platzer M."/>
            <person name="Kay R.R."/>
            <person name="Williams J.G."/>
            <person name="Dear P.H."/>
            <person name="Noegel A.A."/>
            <person name="Barrell B.G."/>
            <person name="Kuspa A."/>
        </authorList>
    </citation>
    <scope>NUCLEOTIDE SEQUENCE [LARGE SCALE GENOMIC DNA]</scope>
    <source>
        <strain evidence="8">AX4</strain>
    </source>
</reference>
<feature type="chain" id="PRO_0000381743" description="Probable serine/threonine-protein kinase mkcE">
    <location>
        <begin position="1"/>
        <end position="715"/>
    </location>
</feature>
<feature type="domain" description="Protein kinase" evidence="4">
    <location>
        <begin position="427"/>
        <end position="683"/>
    </location>
</feature>
<feature type="region of interest" description="Disordered" evidence="6">
    <location>
        <begin position="1"/>
        <end position="125"/>
    </location>
</feature>
<feature type="region of interest" description="Disordered" evidence="6">
    <location>
        <begin position="228"/>
        <end position="330"/>
    </location>
</feature>
<feature type="region of interest" description="Disordered" evidence="6">
    <location>
        <begin position="366"/>
        <end position="385"/>
    </location>
</feature>
<feature type="coiled-coil region" evidence="3">
    <location>
        <begin position="207"/>
        <end position="241"/>
    </location>
</feature>
<feature type="compositionally biased region" description="Gly residues" evidence="6">
    <location>
        <begin position="42"/>
        <end position="53"/>
    </location>
</feature>
<feature type="compositionally biased region" description="Low complexity" evidence="6">
    <location>
        <begin position="54"/>
        <end position="70"/>
    </location>
</feature>
<feature type="compositionally biased region" description="Low complexity" evidence="6">
    <location>
        <begin position="80"/>
        <end position="125"/>
    </location>
</feature>
<feature type="compositionally biased region" description="Low complexity" evidence="6">
    <location>
        <begin position="367"/>
        <end position="378"/>
    </location>
</feature>
<feature type="active site" description="Proton acceptor" evidence="1 4 5">
    <location>
        <position position="550"/>
    </location>
</feature>
<feature type="binding site" evidence="1 4">
    <location>
        <begin position="433"/>
        <end position="441"/>
    </location>
    <ligand>
        <name>ATP</name>
        <dbReference type="ChEBI" id="CHEBI:30616"/>
    </ligand>
</feature>
<feature type="binding site" evidence="1 4">
    <location>
        <position position="459"/>
    </location>
    <ligand>
        <name>ATP</name>
        <dbReference type="ChEBI" id="CHEBI:30616"/>
    </ligand>
</feature>
<proteinExistence type="inferred from homology"/>
<evidence type="ECO:0000250" key="1">
    <source>
        <dbReference type="UniProtKB" id="P28523"/>
    </source>
</evidence>
<evidence type="ECO:0000250" key="2">
    <source>
        <dbReference type="UniProtKB" id="Q869N2"/>
    </source>
</evidence>
<evidence type="ECO:0000255" key="3"/>
<evidence type="ECO:0000255" key="4">
    <source>
        <dbReference type="PROSITE-ProRule" id="PRU00159"/>
    </source>
</evidence>
<evidence type="ECO:0000255" key="5">
    <source>
        <dbReference type="PROSITE-ProRule" id="PRU10027"/>
    </source>
</evidence>
<evidence type="ECO:0000256" key="6">
    <source>
        <dbReference type="SAM" id="MobiDB-lite"/>
    </source>
</evidence>
<evidence type="ECO:0000305" key="7"/>
<evidence type="ECO:0000312" key="8">
    <source>
        <dbReference type="EMBL" id="EAL66586.1"/>
    </source>
</evidence>
<organism>
    <name type="scientific">Dictyostelium discoideum</name>
    <name type="common">Social amoeba</name>
    <dbReference type="NCBI Taxonomy" id="44689"/>
    <lineage>
        <taxon>Eukaryota</taxon>
        <taxon>Amoebozoa</taxon>
        <taxon>Evosea</taxon>
        <taxon>Eumycetozoa</taxon>
        <taxon>Dictyostelia</taxon>
        <taxon>Dictyosteliales</taxon>
        <taxon>Dictyosteliaceae</taxon>
        <taxon>Dictyostelium</taxon>
    </lineage>
</organism>
<protein>
    <recommendedName>
        <fullName evidence="8">Probable serine/threonine-protein kinase mkcE</fullName>
        <ecNumber>2.7.11.1</ecNumber>
    </recommendedName>
    <alternativeName>
        <fullName>MAP kinase cascade E</fullName>
    </alternativeName>
</protein>
<accession>Q54TN4</accession>
<keyword id="KW-0067">ATP-binding</keyword>
<keyword id="KW-0175">Coiled coil</keyword>
<keyword id="KW-0418">Kinase</keyword>
<keyword id="KW-0460">Magnesium</keyword>
<keyword id="KW-0479">Metal-binding</keyword>
<keyword id="KW-0547">Nucleotide-binding</keyword>
<keyword id="KW-1185">Reference proteome</keyword>
<keyword id="KW-0677">Repeat</keyword>
<keyword id="KW-0723">Serine/threonine-protein kinase</keyword>
<keyword id="KW-0808">Transferase</keyword>
<dbReference type="EC" id="2.7.11.1"/>
<dbReference type="EMBL" id="AAFI02000042">
    <property type="protein sequence ID" value="EAL66586.1"/>
    <property type="molecule type" value="Genomic_DNA"/>
</dbReference>
<dbReference type="RefSeq" id="XP_640557.1">
    <property type="nucleotide sequence ID" value="XM_635465.1"/>
</dbReference>
<dbReference type="SMR" id="Q54TN4"/>
<dbReference type="FunCoup" id="Q54TN4">
    <property type="interactions" value="469"/>
</dbReference>
<dbReference type="STRING" id="44689.Q54TN4"/>
<dbReference type="PaxDb" id="44689-DDB0230009"/>
<dbReference type="EnsemblProtists" id="EAL66586">
    <property type="protein sequence ID" value="EAL66586"/>
    <property type="gene ID" value="DDB_G0281649"/>
</dbReference>
<dbReference type="GeneID" id="8623167"/>
<dbReference type="KEGG" id="ddi:DDB_G0281649"/>
<dbReference type="dictyBase" id="DDB_G0281649">
    <property type="gene designation" value="mkcE"/>
</dbReference>
<dbReference type="VEuPathDB" id="AmoebaDB:DDB_G0281649"/>
<dbReference type="eggNOG" id="KOG0578">
    <property type="taxonomic scope" value="Eukaryota"/>
</dbReference>
<dbReference type="HOGENOM" id="CLU_386588_0_0_1"/>
<dbReference type="InParanoid" id="Q54TN4"/>
<dbReference type="OMA" id="HWSNELF"/>
<dbReference type="Reactome" id="R-DDI-383280">
    <property type="pathway name" value="Nuclear Receptor transcription pathway"/>
</dbReference>
<dbReference type="PRO" id="PR:Q54TN4"/>
<dbReference type="Proteomes" id="UP000002195">
    <property type="component" value="Chromosome 3"/>
</dbReference>
<dbReference type="GO" id="GO:0005737">
    <property type="term" value="C:cytoplasm"/>
    <property type="evidence" value="ECO:0000318"/>
    <property type="project" value="GO_Central"/>
</dbReference>
<dbReference type="GO" id="GO:0005524">
    <property type="term" value="F:ATP binding"/>
    <property type="evidence" value="ECO:0007669"/>
    <property type="project" value="UniProtKB-KW"/>
</dbReference>
<dbReference type="GO" id="GO:0046872">
    <property type="term" value="F:metal ion binding"/>
    <property type="evidence" value="ECO:0007669"/>
    <property type="project" value="UniProtKB-KW"/>
</dbReference>
<dbReference type="GO" id="GO:0106310">
    <property type="term" value="F:protein serine kinase activity"/>
    <property type="evidence" value="ECO:0007669"/>
    <property type="project" value="RHEA"/>
</dbReference>
<dbReference type="GO" id="GO:0004674">
    <property type="term" value="F:protein serine/threonine kinase activity"/>
    <property type="evidence" value="ECO:0000318"/>
    <property type="project" value="GO_Central"/>
</dbReference>
<dbReference type="CDD" id="cd05122">
    <property type="entry name" value="PKc_STE"/>
    <property type="match status" value="1"/>
</dbReference>
<dbReference type="Gene3D" id="1.10.510.10">
    <property type="entry name" value="Transferase(Phosphotransferase) domain 1"/>
    <property type="match status" value="1"/>
</dbReference>
<dbReference type="InterPro" id="IPR011009">
    <property type="entry name" value="Kinase-like_dom_sf"/>
</dbReference>
<dbReference type="InterPro" id="IPR051931">
    <property type="entry name" value="PAK3-like"/>
</dbReference>
<dbReference type="InterPro" id="IPR000719">
    <property type="entry name" value="Prot_kinase_dom"/>
</dbReference>
<dbReference type="InterPro" id="IPR001245">
    <property type="entry name" value="Ser-Thr/Tyr_kinase_cat_dom"/>
</dbReference>
<dbReference type="InterPro" id="IPR008271">
    <property type="entry name" value="Ser/Thr_kinase_AS"/>
</dbReference>
<dbReference type="PANTHER" id="PTHR45832">
    <property type="entry name" value="SERINE/THREONINE-PROTEIN KINASE SAMKA-RELATED-RELATED"/>
    <property type="match status" value="1"/>
</dbReference>
<dbReference type="PANTHER" id="PTHR45832:SF22">
    <property type="entry name" value="SERINE_THREONINE-PROTEIN KINASE SAMKA-RELATED"/>
    <property type="match status" value="1"/>
</dbReference>
<dbReference type="Pfam" id="PF00069">
    <property type="entry name" value="Pkinase"/>
    <property type="match status" value="1"/>
</dbReference>
<dbReference type="PRINTS" id="PR00109">
    <property type="entry name" value="TYRKINASE"/>
</dbReference>
<dbReference type="SMART" id="SM00220">
    <property type="entry name" value="S_TKc"/>
    <property type="match status" value="1"/>
</dbReference>
<dbReference type="SUPFAM" id="SSF56112">
    <property type="entry name" value="Protein kinase-like (PK-like)"/>
    <property type="match status" value="1"/>
</dbReference>
<dbReference type="PROSITE" id="PS50011">
    <property type="entry name" value="PROTEIN_KINASE_DOM"/>
    <property type="match status" value="1"/>
</dbReference>
<dbReference type="PROSITE" id="PS00108">
    <property type="entry name" value="PROTEIN_KINASE_ST"/>
    <property type="match status" value="1"/>
</dbReference>
<comment type="catalytic activity">
    <reaction evidence="2">
        <text>L-seryl-[protein] + ATP = O-phospho-L-seryl-[protein] + ADP + H(+)</text>
        <dbReference type="Rhea" id="RHEA:17989"/>
        <dbReference type="Rhea" id="RHEA-COMP:9863"/>
        <dbReference type="Rhea" id="RHEA-COMP:11604"/>
        <dbReference type="ChEBI" id="CHEBI:15378"/>
        <dbReference type="ChEBI" id="CHEBI:29999"/>
        <dbReference type="ChEBI" id="CHEBI:30616"/>
        <dbReference type="ChEBI" id="CHEBI:83421"/>
        <dbReference type="ChEBI" id="CHEBI:456216"/>
        <dbReference type="EC" id="2.7.11.1"/>
    </reaction>
</comment>
<comment type="catalytic activity">
    <reaction evidence="2">
        <text>L-threonyl-[protein] + ATP = O-phospho-L-threonyl-[protein] + ADP + H(+)</text>
        <dbReference type="Rhea" id="RHEA:46608"/>
        <dbReference type="Rhea" id="RHEA-COMP:11060"/>
        <dbReference type="Rhea" id="RHEA-COMP:11605"/>
        <dbReference type="ChEBI" id="CHEBI:15378"/>
        <dbReference type="ChEBI" id="CHEBI:30013"/>
        <dbReference type="ChEBI" id="CHEBI:30616"/>
        <dbReference type="ChEBI" id="CHEBI:61977"/>
        <dbReference type="ChEBI" id="CHEBI:456216"/>
        <dbReference type="EC" id="2.7.11.1"/>
    </reaction>
</comment>
<comment type="cofactor">
    <cofactor evidence="2">
        <name>Mg(2+)</name>
        <dbReference type="ChEBI" id="CHEBI:18420"/>
    </cofactor>
</comment>
<comment type="similarity">
    <text evidence="7">Belongs to the protein kinase superfamily. STE Ser/Thr protein kinase family. STE20 subfamily.</text>
</comment>
<gene>
    <name evidence="8" type="primary">mkcE</name>
    <name type="ORF">DDB_G0281649</name>
</gene>